<proteinExistence type="inferred from homology"/>
<comment type="catalytic activity">
    <reaction evidence="1">
        <text>1-(5-phospho-beta-D-ribosyl)-5-[(5-phospho-beta-D-ribosylamino)methylideneamino]imidazole-4-carboxamide = 5-[(5-phospho-1-deoxy-D-ribulos-1-ylimino)methylamino]-1-(5-phospho-beta-D-ribosyl)imidazole-4-carboxamide</text>
        <dbReference type="Rhea" id="RHEA:15469"/>
        <dbReference type="ChEBI" id="CHEBI:58435"/>
        <dbReference type="ChEBI" id="CHEBI:58525"/>
        <dbReference type="EC" id="5.3.1.16"/>
    </reaction>
</comment>
<comment type="pathway">
    <text evidence="1">Amino-acid biosynthesis; L-histidine biosynthesis; L-histidine from 5-phospho-alpha-D-ribose 1-diphosphate: step 4/9.</text>
</comment>
<comment type="subcellular location">
    <subcellularLocation>
        <location evidence="1">Cytoplasm</location>
    </subcellularLocation>
</comment>
<comment type="similarity">
    <text evidence="1">Belongs to the HisA/HisF family.</text>
</comment>
<dbReference type="EC" id="5.3.1.16" evidence="1"/>
<dbReference type="EMBL" id="AE015928">
    <property type="protein sequence ID" value="AAO76486.1"/>
    <property type="molecule type" value="Genomic_DNA"/>
</dbReference>
<dbReference type="RefSeq" id="NP_810292.1">
    <property type="nucleotide sequence ID" value="NC_004663.1"/>
</dbReference>
<dbReference type="RefSeq" id="WP_008764911.1">
    <property type="nucleotide sequence ID" value="NZ_UYXG01000037.1"/>
</dbReference>
<dbReference type="SMR" id="Q8A7Z5"/>
<dbReference type="FunCoup" id="Q8A7Z5">
    <property type="interactions" value="446"/>
</dbReference>
<dbReference type="STRING" id="226186.BT_1379"/>
<dbReference type="PaxDb" id="226186-BT_1379"/>
<dbReference type="DNASU" id="1072956"/>
<dbReference type="EnsemblBacteria" id="AAO76486">
    <property type="protein sequence ID" value="AAO76486"/>
    <property type="gene ID" value="BT_1379"/>
</dbReference>
<dbReference type="GeneID" id="60927360"/>
<dbReference type="KEGG" id="bth:BT_1379"/>
<dbReference type="PATRIC" id="fig|226186.12.peg.1414"/>
<dbReference type="eggNOG" id="COG0106">
    <property type="taxonomic scope" value="Bacteria"/>
</dbReference>
<dbReference type="HOGENOM" id="CLU_048577_1_2_10"/>
<dbReference type="InParanoid" id="Q8A7Z5"/>
<dbReference type="OrthoDB" id="9807749at2"/>
<dbReference type="UniPathway" id="UPA00031">
    <property type="reaction ID" value="UER00009"/>
</dbReference>
<dbReference type="Proteomes" id="UP000001414">
    <property type="component" value="Chromosome"/>
</dbReference>
<dbReference type="GO" id="GO:0005737">
    <property type="term" value="C:cytoplasm"/>
    <property type="evidence" value="ECO:0000318"/>
    <property type="project" value="GO_Central"/>
</dbReference>
<dbReference type="GO" id="GO:0003949">
    <property type="term" value="F:1-(5-phosphoribosyl)-5-[(5-phosphoribosylamino)methylideneamino]imidazole-4-carboxamide isomerase activity"/>
    <property type="evidence" value="ECO:0000318"/>
    <property type="project" value="GO_Central"/>
</dbReference>
<dbReference type="GO" id="GO:0000105">
    <property type="term" value="P:L-histidine biosynthetic process"/>
    <property type="evidence" value="ECO:0000318"/>
    <property type="project" value="GO_Central"/>
</dbReference>
<dbReference type="CDD" id="cd04732">
    <property type="entry name" value="HisA"/>
    <property type="match status" value="1"/>
</dbReference>
<dbReference type="FunFam" id="3.20.20.70:FF:000009">
    <property type="entry name" value="1-(5-phosphoribosyl)-5-[(5-phosphoribosylamino)methylideneamino] imidazole-4-carboxamide isomerase"/>
    <property type="match status" value="1"/>
</dbReference>
<dbReference type="Gene3D" id="3.20.20.70">
    <property type="entry name" value="Aldolase class I"/>
    <property type="match status" value="1"/>
</dbReference>
<dbReference type="HAMAP" id="MF_01014">
    <property type="entry name" value="HisA"/>
    <property type="match status" value="1"/>
</dbReference>
<dbReference type="InterPro" id="IPR013785">
    <property type="entry name" value="Aldolase_TIM"/>
</dbReference>
<dbReference type="InterPro" id="IPR006062">
    <property type="entry name" value="His_biosynth"/>
</dbReference>
<dbReference type="InterPro" id="IPR006063">
    <property type="entry name" value="HisA_bact_arch"/>
</dbReference>
<dbReference type="InterPro" id="IPR044524">
    <property type="entry name" value="Isoase_HisA-like"/>
</dbReference>
<dbReference type="InterPro" id="IPR023016">
    <property type="entry name" value="Isoase_HisA-like_bact"/>
</dbReference>
<dbReference type="InterPro" id="IPR011060">
    <property type="entry name" value="RibuloseP-bd_barrel"/>
</dbReference>
<dbReference type="NCBIfam" id="TIGR00007">
    <property type="entry name" value="1-(5-phosphoribosyl)-5-[(5-phosphoribosylamino)methylideneamino]imidazole-4-carboxamide isomerase"/>
    <property type="match status" value="1"/>
</dbReference>
<dbReference type="PANTHER" id="PTHR43090">
    <property type="entry name" value="1-(5-PHOSPHORIBOSYL)-5-[(5-PHOSPHORIBOSYLAMINO)METHYLIDENEAMINO] IMIDAZOLE-4-CARBOXAMIDE ISOMERASE"/>
    <property type="match status" value="1"/>
</dbReference>
<dbReference type="PANTHER" id="PTHR43090:SF2">
    <property type="entry name" value="1-(5-PHOSPHORIBOSYL)-5-[(5-PHOSPHORIBOSYLAMINO)METHYLIDENEAMINO] IMIDAZOLE-4-CARBOXAMIDE ISOMERASE"/>
    <property type="match status" value="1"/>
</dbReference>
<dbReference type="Pfam" id="PF00977">
    <property type="entry name" value="His_biosynth"/>
    <property type="match status" value="1"/>
</dbReference>
<dbReference type="SUPFAM" id="SSF51366">
    <property type="entry name" value="Ribulose-phoshate binding barrel"/>
    <property type="match status" value="1"/>
</dbReference>
<sequence length="239" mass="26268">MIEIIPAIDIIDGKCVRLSQGDYDSKKVYNENPVEVAKEFEANGVRRLHVVDLDGAASHHVVNHRVLEQIATRTSLIVDFGGGVKSDEDLKIAFESGAQMVTGGSVAVKDPELFCHWLEVYGSEKIILGADVKEHKIAVNGWKDESACELFPFLEDYINKGIQKVICTDISCDGMLKGPSIDLYKEMLEKFPNLYLMASGGVSNVDDIIALNEAGVPGVIFGKALYEGHITLKDLRIFL</sequence>
<reference key="1">
    <citation type="journal article" date="2003" name="Science">
        <title>A genomic view of the human-Bacteroides thetaiotaomicron symbiosis.</title>
        <authorList>
            <person name="Xu J."/>
            <person name="Bjursell M.K."/>
            <person name="Himrod J."/>
            <person name="Deng S."/>
            <person name="Carmichael L.K."/>
            <person name="Chiang H.C."/>
            <person name="Hooper L.V."/>
            <person name="Gordon J.I."/>
        </authorList>
    </citation>
    <scope>NUCLEOTIDE SEQUENCE [LARGE SCALE GENOMIC DNA]</scope>
    <source>
        <strain>ATCC 29148 / DSM 2079 / JCM 5827 / CCUG 10774 / NCTC 10582 / VPI-5482 / E50</strain>
    </source>
</reference>
<accession>Q8A7Z5</accession>
<evidence type="ECO:0000255" key="1">
    <source>
        <dbReference type="HAMAP-Rule" id="MF_01014"/>
    </source>
</evidence>
<feature type="chain" id="PRO_0000141979" description="1-(5-phosphoribosyl)-5-[(5-phosphoribosylamino)methylideneamino] imidazole-4-carboxamide isomerase">
    <location>
        <begin position="1"/>
        <end position="239"/>
    </location>
</feature>
<feature type="active site" description="Proton acceptor" evidence="1">
    <location>
        <position position="9"/>
    </location>
</feature>
<feature type="active site" description="Proton donor" evidence="1">
    <location>
        <position position="131"/>
    </location>
</feature>
<gene>
    <name evidence="1" type="primary">hisA</name>
    <name type="ordered locus">BT_1379</name>
</gene>
<name>HIS4_BACTN</name>
<keyword id="KW-0028">Amino-acid biosynthesis</keyword>
<keyword id="KW-0963">Cytoplasm</keyword>
<keyword id="KW-0368">Histidine biosynthesis</keyword>
<keyword id="KW-0413">Isomerase</keyword>
<keyword id="KW-1185">Reference proteome</keyword>
<protein>
    <recommendedName>
        <fullName evidence="1">1-(5-phosphoribosyl)-5-[(5-phosphoribosylamino)methylideneamino] imidazole-4-carboxamide isomerase</fullName>
        <ecNumber evidence="1">5.3.1.16</ecNumber>
    </recommendedName>
    <alternativeName>
        <fullName evidence="1">Phosphoribosylformimino-5-aminoimidazole carboxamide ribotide isomerase</fullName>
    </alternativeName>
</protein>
<organism>
    <name type="scientific">Bacteroides thetaiotaomicron (strain ATCC 29148 / DSM 2079 / JCM 5827 / CCUG 10774 / NCTC 10582 / VPI-5482 / E50)</name>
    <dbReference type="NCBI Taxonomy" id="226186"/>
    <lineage>
        <taxon>Bacteria</taxon>
        <taxon>Pseudomonadati</taxon>
        <taxon>Bacteroidota</taxon>
        <taxon>Bacteroidia</taxon>
        <taxon>Bacteroidales</taxon>
        <taxon>Bacteroidaceae</taxon>
        <taxon>Bacteroides</taxon>
    </lineage>
</organism>